<protein>
    <recommendedName>
        <fullName>Putative 4-hydroxy-4-methyl-2-oxoglutarate aldolase</fullName>
        <shortName>HMG aldolase</shortName>
        <ecNumber>4.1.3.17</ecNumber>
    </recommendedName>
    <alternativeName>
        <fullName>Oxaloacetate decarboxylase</fullName>
        <shortName>OAA decarboxylase</shortName>
        <ecNumber>4.1.1.112</ecNumber>
    </alternativeName>
    <alternativeName>
        <fullName>Regulator of ribonuclease activity homolog</fullName>
    </alternativeName>
    <alternativeName>
        <fullName>RraA-like protein</fullName>
    </alternativeName>
</protein>
<comment type="function">
    <text evidence="1">Catalyzes the aldol cleavage of 4-hydroxy-4-methyl-2-oxoglutarate (HMG) into 2 molecules of pyruvate. Also contains a secondary oxaloacetate (OAA) decarboxylase activity due to the common pyruvate enolate transition state formed following C-C bond cleavage in the retro-aldol and decarboxylation reactions (By similarity).</text>
</comment>
<comment type="catalytic activity">
    <reaction>
        <text>4-hydroxy-4-methyl-2-oxoglutarate = 2 pyruvate</text>
        <dbReference type="Rhea" id="RHEA:22748"/>
        <dbReference type="ChEBI" id="CHEBI:15361"/>
        <dbReference type="ChEBI" id="CHEBI:58276"/>
        <dbReference type="EC" id="4.1.3.17"/>
    </reaction>
</comment>
<comment type="catalytic activity">
    <reaction>
        <text>oxaloacetate + H(+) = pyruvate + CO2</text>
        <dbReference type="Rhea" id="RHEA:15641"/>
        <dbReference type="ChEBI" id="CHEBI:15361"/>
        <dbReference type="ChEBI" id="CHEBI:15378"/>
        <dbReference type="ChEBI" id="CHEBI:16452"/>
        <dbReference type="ChEBI" id="CHEBI:16526"/>
        <dbReference type="EC" id="4.1.1.112"/>
    </reaction>
</comment>
<comment type="cofactor">
    <cofactor evidence="1">
        <name>a divalent metal cation</name>
        <dbReference type="ChEBI" id="CHEBI:60240"/>
    </cofactor>
    <text evidence="1">Divalent metal cation.</text>
</comment>
<comment type="subunit">
    <text evidence="1">Homotrimer.</text>
</comment>
<comment type="similarity">
    <text evidence="2">Belongs to the class II aldolase/RraA-like family.</text>
</comment>
<feature type="chain" id="PRO_1000013853" description="Putative 4-hydroxy-4-methyl-2-oxoglutarate aldolase">
    <location>
        <begin position="1"/>
        <end position="157"/>
    </location>
</feature>
<feature type="binding site" evidence="1">
    <location>
        <begin position="78"/>
        <end position="81"/>
    </location>
    <ligand>
        <name>substrate</name>
    </ligand>
</feature>
<feature type="binding site" evidence="1">
    <location>
        <position position="100"/>
    </location>
    <ligand>
        <name>substrate</name>
    </ligand>
</feature>
<feature type="binding site" evidence="1">
    <location>
        <position position="101"/>
    </location>
    <ligand>
        <name>a divalent metal cation</name>
        <dbReference type="ChEBI" id="CHEBI:60240"/>
    </ligand>
</feature>
<dbReference type="EC" id="4.1.3.17"/>
<dbReference type="EC" id="4.1.1.112"/>
<dbReference type="EMBL" id="CP000611">
    <property type="protein sequence ID" value="ABQ75682.1"/>
    <property type="molecule type" value="Genomic_DNA"/>
</dbReference>
<dbReference type="SMR" id="A5U9I2"/>
<dbReference type="KEGG" id="mra:MRA_3893"/>
<dbReference type="eggNOG" id="COG0684">
    <property type="taxonomic scope" value="Bacteria"/>
</dbReference>
<dbReference type="HOGENOM" id="CLU_072626_4_0_11"/>
<dbReference type="Proteomes" id="UP000001988">
    <property type="component" value="Chromosome"/>
</dbReference>
<dbReference type="GO" id="GO:0047443">
    <property type="term" value="F:4-hydroxy-4-methyl-2-oxoglutarate aldolase activity"/>
    <property type="evidence" value="ECO:0007669"/>
    <property type="project" value="UniProtKB-EC"/>
</dbReference>
<dbReference type="GO" id="GO:0046872">
    <property type="term" value="F:metal ion binding"/>
    <property type="evidence" value="ECO:0007669"/>
    <property type="project" value="UniProtKB-KW"/>
</dbReference>
<dbReference type="GO" id="GO:0008948">
    <property type="term" value="F:oxaloacetate decarboxylase activity"/>
    <property type="evidence" value="ECO:0007669"/>
    <property type="project" value="UniProtKB-EC"/>
</dbReference>
<dbReference type="GO" id="GO:0008428">
    <property type="term" value="F:ribonuclease inhibitor activity"/>
    <property type="evidence" value="ECO:0007669"/>
    <property type="project" value="InterPro"/>
</dbReference>
<dbReference type="GO" id="GO:0051252">
    <property type="term" value="P:regulation of RNA metabolic process"/>
    <property type="evidence" value="ECO:0007669"/>
    <property type="project" value="InterPro"/>
</dbReference>
<dbReference type="CDD" id="cd16841">
    <property type="entry name" value="RraA_family"/>
    <property type="match status" value="1"/>
</dbReference>
<dbReference type="Gene3D" id="3.50.30.40">
    <property type="entry name" value="Ribonuclease E inhibitor RraA/RraA-like"/>
    <property type="match status" value="1"/>
</dbReference>
<dbReference type="InterPro" id="IPR010203">
    <property type="entry name" value="RraA"/>
</dbReference>
<dbReference type="InterPro" id="IPR005493">
    <property type="entry name" value="RraA/RraA-like"/>
</dbReference>
<dbReference type="InterPro" id="IPR036704">
    <property type="entry name" value="RraA/RraA-like_sf"/>
</dbReference>
<dbReference type="NCBIfam" id="TIGR01935">
    <property type="entry name" value="NOT-MenG"/>
    <property type="match status" value="1"/>
</dbReference>
<dbReference type="NCBIfam" id="NF006875">
    <property type="entry name" value="PRK09372.1"/>
    <property type="match status" value="1"/>
</dbReference>
<dbReference type="PANTHER" id="PTHR33254">
    <property type="entry name" value="4-HYDROXY-4-METHYL-2-OXOGLUTARATE ALDOLASE 3-RELATED"/>
    <property type="match status" value="1"/>
</dbReference>
<dbReference type="PANTHER" id="PTHR33254:SF4">
    <property type="entry name" value="4-HYDROXY-4-METHYL-2-OXOGLUTARATE ALDOLASE 3-RELATED"/>
    <property type="match status" value="1"/>
</dbReference>
<dbReference type="Pfam" id="PF03737">
    <property type="entry name" value="RraA-like"/>
    <property type="match status" value="1"/>
</dbReference>
<dbReference type="SUPFAM" id="SSF89562">
    <property type="entry name" value="RraA-like"/>
    <property type="match status" value="1"/>
</dbReference>
<name>RRAAH_MYCTA</name>
<reference key="1">
    <citation type="journal article" date="2008" name="PLoS ONE">
        <title>Genetic basis of virulence attenuation revealed by comparative genomic analysis of Mycobacterium tuberculosis strain H37Ra versus H37Rv.</title>
        <authorList>
            <person name="Zheng H."/>
            <person name="Lu L."/>
            <person name="Wang B."/>
            <person name="Pu S."/>
            <person name="Zhang X."/>
            <person name="Zhu G."/>
            <person name="Shi W."/>
            <person name="Zhang L."/>
            <person name="Wang H."/>
            <person name="Wang S."/>
            <person name="Zhao G."/>
            <person name="Zhang Y."/>
        </authorList>
    </citation>
    <scope>NUCLEOTIDE SEQUENCE [LARGE SCALE GENOMIC DNA]</scope>
    <source>
        <strain>ATCC 25177 / H37Ra</strain>
    </source>
</reference>
<evidence type="ECO:0000250" key="1"/>
<evidence type="ECO:0000305" key="2"/>
<gene>
    <name type="ordered locus">MRA_3893</name>
</gene>
<keyword id="KW-0456">Lyase</keyword>
<keyword id="KW-0479">Metal-binding</keyword>
<keyword id="KW-1185">Reference proteome</keyword>
<organism>
    <name type="scientific">Mycobacterium tuberculosis (strain ATCC 25177 / H37Ra)</name>
    <dbReference type="NCBI Taxonomy" id="419947"/>
    <lineage>
        <taxon>Bacteria</taxon>
        <taxon>Bacillati</taxon>
        <taxon>Actinomycetota</taxon>
        <taxon>Actinomycetes</taxon>
        <taxon>Mycobacteriales</taxon>
        <taxon>Mycobacteriaceae</taxon>
        <taxon>Mycobacterium</taxon>
        <taxon>Mycobacterium tuberculosis complex</taxon>
    </lineage>
</organism>
<proteinExistence type="inferred from homology"/>
<accession>A5U9I2</accession>
<sequence length="157" mass="16235">MAISFRPTADLVDDIGPDVRSCDLQFRQFGGRSQFAGPISTVRCFQDNALLKSVLSQPSAGGVLVIDGAGSLHTALVGDVIAELARSTGWTGLIVHGAVRDAAALRGIDIGIKALGTNPRKSTKTGAGERDVEITLGGVTFVPGDIAYSDDDGIIVV</sequence>